<evidence type="ECO:0000255" key="1">
    <source>
        <dbReference type="HAMAP-Rule" id="MF_00802"/>
    </source>
</evidence>
<keyword id="KW-0067">ATP-binding</keyword>
<keyword id="KW-0460">Magnesium</keyword>
<keyword id="KW-0511">Multifunctional enzyme</keyword>
<keyword id="KW-0547">Nucleotide-binding</keyword>
<keyword id="KW-0548">Nucleotidyltransferase</keyword>
<keyword id="KW-1185">Reference proteome</keyword>
<keyword id="KW-0808">Transferase</keyword>
<reference key="1">
    <citation type="journal article" date="2008" name="BMC Genomics">
        <title>Genomics of an extreme psychrophile, Psychromonas ingrahamii.</title>
        <authorList>
            <person name="Riley M."/>
            <person name="Staley J.T."/>
            <person name="Danchin A."/>
            <person name="Wang T.Z."/>
            <person name="Brettin T.S."/>
            <person name="Hauser L.J."/>
            <person name="Land M.L."/>
            <person name="Thompson L.S."/>
        </authorList>
    </citation>
    <scope>NUCLEOTIDE SEQUENCE [LARGE SCALE GENOMIC DNA]</scope>
    <source>
        <strain>DSM 17664 / CCUG 51855 / 37</strain>
    </source>
</reference>
<comment type="function">
    <text evidence="1">Involved in the regulation of glutamine synthetase GlnA, a key enzyme in the process to assimilate ammonia. When cellular nitrogen levels are high, the C-terminal adenylyl transferase (AT) inactivates GlnA by covalent transfer of an adenylyl group from ATP to specific tyrosine residue of GlnA, thus reducing its activity. Conversely, when nitrogen levels are low, the N-terminal adenylyl removase (AR) activates GlnA by removing the adenylyl group by phosphorolysis, increasing its activity. The regulatory region of GlnE binds the signal transduction protein PII (GlnB) which indicates the nitrogen status of the cell.</text>
</comment>
<comment type="catalytic activity">
    <reaction evidence="1">
        <text>[glutamine synthetase]-O(4)-(5'-adenylyl)-L-tyrosine + phosphate = [glutamine synthetase]-L-tyrosine + ADP</text>
        <dbReference type="Rhea" id="RHEA:43716"/>
        <dbReference type="Rhea" id="RHEA-COMP:10660"/>
        <dbReference type="Rhea" id="RHEA-COMP:10661"/>
        <dbReference type="ChEBI" id="CHEBI:43474"/>
        <dbReference type="ChEBI" id="CHEBI:46858"/>
        <dbReference type="ChEBI" id="CHEBI:83624"/>
        <dbReference type="ChEBI" id="CHEBI:456216"/>
        <dbReference type="EC" id="2.7.7.89"/>
    </reaction>
</comment>
<comment type="catalytic activity">
    <reaction evidence="1">
        <text>[glutamine synthetase]-L-tyrosine + ATP = [glutamine synthetase]-O(4)-(5'-adenylyl)-L-tyrosine + diphosphate</text>
        <dbReference type="Rhea" id="RHEA:18589"/>
        <dbReference type="Rhea" id="RHEA-COMP:10660"/>
        <dbReference type="Rhea" id="RHEA-COMP:10661"/>
        <dbReference type="ChEBI" id="CHEBI:30616"/>
        <dbReference type="ChEBI" id="CHEBI:33019"/>
        <dbReference type="ChEBI" id="CHEBI:46858"/>
        <dbReference type="ChEBI" id="CHEBI:83624"/>
        <dbReference type="EC" id="2.7.7.42"/>
    </reaction>
</comment>
<comment type="cofactor">
    <cofactor evidence="1">
        <name>Mg(2+)</name>
        <dbReference type="ChEBI" id="CHEBI:18420"/>
    </cofactor>
</comment>
<comment type="similarity">
    <text evidence="1">Belongs to the GlnE family.</text>
</comment>
<proteinExistence type="inferred from homology"/>
<dbReference type="EC" id="2.7.7.89" evidence="1"/>
<dbReference type="EC" id="2.7.7.42" evidence="1"/>
<dbReference type="EMBL" id="CP000510">
    <property type="protein sequence ID" value="ABM02055.1"/>
    <property type="molecule type" value="Genomic_DNA"/>
</dbReference>
<dbReference type="RefSeq" id="WP_011768614.1">
    <property type="nucleotide sequence ID" value="NC_008709.1"/>
</dbReference>
<dbReference type="SMR" id="A1SRE0"/>
<dbReference type="STRING" id="357804.Ping_0187"/>
<dbReference type="KEGG" id="pin:Ping_0187"/>
<dbReference type="eggNOG" id="COG1391">
    <property type="taxonomic scope" value="Bacteria"/>
</dbReference>
<dbReference type="HOGENOM" id="CLU_006233_0_1_6"/>
<dbReference type="OrthoDB" id="9759366at2"/>
<dbReference type="Proteomes" id="UP000000639">
    <property type="component" value="Chromosome"/>
</dbReference>
<dbReference type="GO" id="GO:0005829">
    <property type="term" value="C:cytosol"/>
    <property type="evidence" value="ECO:0007669"/>
    <property type="project" value="TreeGrafter"/>
</dbReference>
<dbReference type="GO" id="GO:0008882">
    <property type="term" value="F:[glutamate-ammonia-ligase] adenylyltransferase activity"/>
    <property type="evidence" value="ECO:0007669"/>
    <property type="project" value="UniProtKB-UniRule"/>
</dbReference>
<dbReference type="GO" id="GO:0047388">
    <property type="term" value="F:[glutamine synthetase]-adenylyl-L-tyrosine phosphorylase activity"/>
    <property type="evidence" value="ECO:0007669"/>
    <property type="project" value="UniProtKB-EC"/>
</dbReference>
<dbReference type="GO" id="GO:0005524">
    <property type="term" value="F:ATP binding"/>
    <property type="evidence" value="ECO:0007669"/>
    <property type="project" value="UniProtKB-UniRule"/>
</dbReference>
<dbReference type="GO" id="GO:0000287">
    <property type="term" value="F:magnesium ion binding"/>
    <property type="evidence" value="ECO:0007669"/>
    <property type="project" value="UniProtKB-UniRule"/>
</dbReference>
<dbReference type="GO" id="GO:0000820">
    <property type="term" value="P:regulation of glutamine family amino acid metabolic process"/>
    <property type="evidence" value="ECO:0007669"/>
    <property type="project" value="UniProtKB-UniRule"/>
</dbReference>
<dbReference type="CDD" id="cd05401">
    <property type="entry name" value="NT_GlnE_GlnD_like"/>
    <property type="match status" value="2"/>
</dbReference>
<dbReference type="FunFam" id="1.20.120.330:FF:000005">
    <property type="entry name" value="Bifunctional glutamine synthetase adenylyltransferase/adenylyl-removing enzyme"/>
    <property type="match status" value="1"/>
</dbReference>
<dbReference type="FunFam" id="3.30.460.10:FF:000009">
    <property type="entry name" value="Bifunctional glutamine synthetase adenylyltransferase/adenylyl-removing enzyme"/>
    <property type="match status" value="1"/>
</dbReference>
<dbReference type="Gene3D" id="1.20.120.1510">
    <property type="match status" value="1"/>
</dbReference>
<dbReference type="Gene3D" id="3.30.460.10">
    <property type="entry name" value="Beta Polymerase, domain 2"/>
    <property type="match status" value="2"/>
</dbReference>
<dbReference type="Gene3D" id="1.10.4050.10">
    <property type="entry name" value="Glutamine synthase adenylyltransferase GlnE"/>
    <property type="match status" value="1"/>
</dbReference>
<dbReference type="Gene3D" id="1.20.120.330">
    <property type="entry name" value="Nucleotidyltransferases domain 2"/>
    <property type="match status" value="2"/>
</dbReference>
<dbReference type="HAMAP" id="MF_00802">
    <property type="entry name" value="GlnE"/>
    <property type="match status" value="1"/>
</dbReference>
<dbReference type="InterPro" id="IPR023057">
    <property type="entry name" value="GlnE"/>
</dbReference>
<dbReference type="InterPro" id="IPR005190">
    <property type="entry name" value="GlnE_rpt_dom"/>
</dbReference>
<dbReference type="InterPro" id="IPR043519">
    <property type="entry name" value="NT_sf"/>
</dbReference>
<dbReference type="InterPro" id="IPR013546">
    <property type="entry name" value="PII_UdlTrfase/GS_AdlTrfase"/>
</dbReference>
<dbReference type="NCBIfam" id="NF008292">
    <property type="entry name" value="PRK11072.1"/>
    <property type="match status" value="1"/>
</dbReference>
<dbReference type="PANTHER" id="PTHR30621:SF0">
    <property type="entry name" value="BIFUNCTIONAL GLUTAMINE SYNTHETASE ADENYLYLTRANSFERASE_ADENYLYL-REMOVING ENZYME"/>
    <property type="match status" value="1"/>
</dbReference>
<dbReference type="PANTHER" id="PTHR30621">
    <property type="entry name" value="GLUTAMINE SYNTHETASE ADENYLYLTRANSFERASE"/>
    <property type="match status" value="1"/>
</dbReference>
<dbReference type="Pfam" id="PF08335">
    <property type="entry name" value="GlnD_UR_UTase"/>
    <property type="match status" value="2"/>
</dbReference>
<dbReference type="Pfam" id="PF03710">
    <property type="entry name" value="GlnE"/>
    <property type="match status" value="2"/>
</dbReference>
<dbReference type="SUPFAM" id="SSF81301">
    <property type="entry name" value="Nucleotidyltransferase"/>
    <property type="match status" value="2"/>
</dbReference>
<dbReference type="SUPFAM" id="SSF81593">
    <property type="entry name" value="Nucleotidyltransferase substrate binding subunit/domain"/>
    <property type="match status" value="2"/>
</dbReference>
<protein>
    <recommendedName>
        <fullName evidence="1">Bifunctional glutamine synthetase adenylyltransferase/adenylyl-removing enzyme</fullName>
    </recommendedName>
    <alternativeName>
        <fullName evidence="1">ATP:glutamine synthetase adenylyltransferase</fullName>
    </alternativeName>
    <alternativeName>
        <fullName evidence="1">ATase</fullName>
    </alternativeName>
    <domain>
        <recommendedName>
            <fullName evidence="1">Glutamine synthetase adenylyl-L-tyrosine phosphorylase</fullName>
            <ecNumber evidence="1">2.7.7.89</ecNumber>
        </recommendedName>
        <alternativeName>
            <fullName evidence="1">Adenylyl removase</fullName>
            <shortName evidence="1">AR</shortName>
            <shortName evidence="1">AT-N</shortName>
        </alternativeName>
    </domain>
    <domain>
        <recommendedName>
            <fullName evidence="1">Glutamine synthetase adenylyl transferase</fullName>
            <ecNumber evidence="1">2.7.7.42</ecNumber>
        </recommendedName>
        <alternativeName>
            <fullName evidence="1">Adenylyl transferase</fullName>
            <shortName evidence="1">AT</shortName>
            <shortName evidence="1">AT-C</shortName>
        </alternativeName>
    </domain>
</protein>
<gene>
    <name evidence="1" type="primary">glnE</name>
    <name type="ordered locus">Ping_0187</name>
</gene>
<accession>A1SRE0</accession>
<organism>
    <name type="scientific">Psychromonas ingrahamii (strain DSM 17664 / CCUG 51855 / 37)</name>
    <dbReference type="NCBI Taxonomy" id="357804"/>
    <lineage>
        <taxon>Bacteria</taxon>
        <taxon>Pseudomonadati</taxon>
        <taxon>Pseudomonadota</taxon>
        <taxon>Gammaproteobacteria</taxon>
        <taxon>Alteromonadales</taxon>
        <taxon>Psychromonadaceae</taxon>
        <taxon>Psychromonas</taxon>
    </lineage>
</organism>
<feature type="chain" id="PRO_1000047013" description="Bifunctional glutamine synthetase adenylyltransferase/adenylyl-removing enzyme">
    <location>
        <begin position="1"/>
        <end position="946"/>
    </location>
</feature>
<feature type="region of interest" description="Adenylyl removase" evidence="1">
    <location>
        <begin position="1"/>
        <end position="441"/>
    </location>
</feature>
<feature type="region of interest" description="Adenylyl transferase" evidence="1">
    <location>
        <begin position="448"/>
        <end position="946"/>
    </location>
</feature>
<sequence length="946" mass="108904">MSLLNDAALHHFENLNNRIDLNSLKLSQHTELMKVLGLSDFVAESLIKQPALLTDLLDNELLSLADRKEVITTELESAIAKVKDEVTLHRVLRLFRRKHMVVIAWRELLGKAHLVESLDHISYLADQLILQCMSWLYKKQCVEQGIPMNNEGVRQPFFIFAMGKLGGKELNFSSDIDLIFTYPERGETQGERRRIDNQSFFTKLGQRIIGALHQTTVDGFVYRVDMRLRPFGESGPLITNFASIEDYYQSHGRDWERYAMIKARVMGEEGDYKTTLEALLKPFVYRRYIDFSAIESLRKMKAMISSEVRRKGLKDNIKLGKGGIREIEFVAQAFQLIRGGRRAELQCKGLRETLKVLAEIGEVPKERVQSLLDAYHFLRAVENVLQQIGDKQTQTLPDNELDKLRLITVMGYSNWQDFYSKLNQEMDNVHAEFNWVIGDDEEAHDEADQALSELWALHLSQQEATHLLHEKGLDESLAAHFATALSALKEELKKRPIGPRGQATLDKLMPRMIELICVYPDPVELLNRITQLLLKIISRTAYLELLNENDGALKQLLKLCNESTRVASQLARHPILLDELLDPQQLYKPTQLDNYRTELQLFMLRIPEEDMEQQMEALRQFKQIQFLYIAAADIEKSIQLPQVSDHLTYLSEAIMDYVVQIAWLQMVDKFGLPSNVIGSDRKGFAVIGYGKMGGIELGYGSDLDVVFLHDDNIKGETNGRRKIDNQLFYFRLAQRIIHLFSARTNSGILYEIDMRLRPSGDSGILVSSVASYKKYLQNNAWTWEHQALVRARAVFFDKLILAKFNEARETVLSQARNNSALATEIRDMRAKMRKHLSREKEGQFDLKQSPGGMVDIEFFAQYLVLAHACHCGEELCKWSDNLRIFETCRKLGLLTLDEEKKLTGAYCALRDATHRLTLNKKTRIIKGDQFIQERQNVIKIWEKFLD</sequence>
<name>GLNE_PSYIN</name>